<reference key="1">
    <citation type="submission" date="2011-08" db="EMBL/GenBank/DDBJ databases">
        <title>Complete sequence of plasmid 1 of Rhodothermus marinus SG0.5JP17-172.</title>
        <authorList>
            <consortium name="US DOE Joint Genome Institute"/>
            <person name="Lucas S."/>
            <person name="Han J."/>
            <person name="Lapidus A."/>
            <person name="Cheng J.-F."/>
            <person name="Goodwin L."/>
            <person name="Pitluck S."/>
            <person name="Peters L."/>
            <person name="Ovchinnikova G."/>
            <person name="Chertkov O."/>
            <person name="Detter J.C."/>
            <person name="Han C."/>
            <person name="Tapia R."/>
            <person name="Land M."/>
            <person name="Hauser L."/>
            <person name="Kyrpides N."/>
            <person name="Ivanova N."/>
            <person name="Pagani I."/>
            <person name="Gladden J."/>
            <person name="Woyke T."/>
        </authorList>
    </citation>
    <scope>NUCLEOTIDE SEQUENCE [LARGE SCALE GENOMIC DNA]</scope>
    <source>
        <strain>SG0.5JP17-172</strain>
        <plasmid>pRHOM17201</plasmid>
    </source>
</reference>
<reference key="2">
    <citation type="journal article" date="2020" name="Nat. Microbiol.">
        <title>Diversity and classification of cyclic-oligonucleotide-based anti-phage signalling systems.</title>
        <authorList>
            <person name="Millman A."/>
            <person name="Melamed S."/>
            <person name="Amitai G."/>
            <person name="Sorek R."/>
        </authorList>
    </citation>
    <scope>CLASSIFICATION AND NOMENCLATURE</scope>
</reference>
<reference evidence="8 9" key="3">
    <citation type="journal article" date="2019" name="Nature">
        <title>Bacterial cGAS-like enzymes synthesize diverse nucleotide signals.</title>
        <authorList>
            <person name="Whiteley A.T."/>
            <person name="Eaglesham J.B."/>
            <person name="de Oliveira Mann C.C."/>
            <person name="Morehouse B.R."/>
            <person name="Lowey B."/>
            <person name="Nieminen E.A."/>
            <person name="Danilchanka O."/>
            <person name="King D.S."/>
            <person name="Lee A.S.Y."/>
            <person name="Mekalanos J.J."/>
            <person name="Kranzusch P.J."/>
        </authorList>
    </citation>
    <scope>X-RAY CRYSTALLOGRAPHY (1.60 ANGSTROMS) OF APOENZYME AND IN COMPLEX WITH NON-HYDROLYSABLE ATP AND UTP AND MAGNESIUM</scope>
    <scope>FUNCTION</scope>
    <scope>CATALYTIC ACTIVITY</scope>
    <scope>COFACTOR</scope>
    <scope>NOMENCLATURE</scope>
    <scope>SIMILARITY</scope>
    <scope>MUTAGENESIS OF ASN-166</scope>
</reference>
<keyword id="KW-0002">3D-structure</keyword>
<keyword id="KW-0051">Antiviral defense</keyword>
<keyword id="KW-0067">ATP-binding</keyword>
<keyword id="KW-0460">Magnesium</keyword>
<keyword id="KW-0479">Metal-binding</keyword>
<keyword id="KW-0546">Nucleotide metabolism</keyword>
<keyword id="KW-0547">Nucleotide-binding</keyword>
<keyword id="KW-0548">Nucleotidyltransferase</keyword>
<keyword id="KW-0614">Plasmid</keyword>
<keyword id="KW-0808">Transferase</keyword>
<organism>
    <name type="scientific">Rhodothermus marinus (strain SG0.5JP17-172)</name>
    <dbReference type="NCBI Taxonomy" id="762570"/>
    <lineage>
        <taxon>Bacteria</taxon>
        <taxon>Pseudomonadati</taxon>
        <taxon>Rhodothermota</taxon>
        <taxon>Rhodothermia</taxon>
        <taxon>Rhodothermales</taxon>
        <taxon>Rhodothermaceae</taxon>
        <taxon>Rhodothermus</taxon>
    </lineage>
</organism>
<name>CDNE_RHOMG</name>
<sequence length="288" mass="33874">MPVPESQLERWSHQGATTTAKKTHESIRAALDRYKWPKGKPEVYLQGSYKNSTNIRGDSDVDVVVQLNSVFMNNLTAEQKRRFGFVKSDYTWNDFYSDVERALTDYYGASKVRRGRKTLKVETTYLPADVVVCIQYRKYPPNRKSEDDYIEGMTFYVPSEDRWVVNYPKLHYENGAAKNQQTNEWYKPTIRMFKNARTYLIEQGAPQDLAPSYFLECLLYNVPDSKFGGTFKDTFCSVINWLKRADLSKFRCQNGQDDLFGEFPEQWSEEKARRFLRYMDDLWTGWGQ</sequence>
<accession>G2SLH8</accession>
<proteinExistence type="evidence at protein level"/>
<comment type="function">
    <text evidence="2 4 5">Cyclic nucleotide synthase (second messenger synthase) of a CBASS antivirus system (PubMed:30787435). CBASS (cyclic oligonucleotide-based antiphage signaling system) provides immunity against bacteriophage. The CD-NTase protein synthesizes cyclic nucleotides in response to infection; these serve as specific second messenger signals. The signals activate a diverse range of effectors, leading to bacterial cell death and thus abortive phage infection. A type I-B(UU) CBASS system (PubMed:32839535).</text>
</comment>
<comment type="function">
    <text evidence="2">Cyclic dinucleotide synthase that catalyzes the synthesis of 3'3'-cyclic UMP-AMP (cUMP-AMP) from UTP and ATP, a second messenger for cell signal transduction.</text>
</comment>
<comment type="catalytic activity">
    <reaction evidence="2">
        <text>UTP + ATP = 3',3'-cUAMP + 2 diphosphate</text>
        <dbReference type="Rhea" id="RHEA:60456"/>
        <dbReference type="ChEBI" id="CHEBI:30616"/>
        <dbReference type="ChEBI" id="CHEBI:33019"/>
        <dbReference type="ChEBI" id="CHEBI:46398"/>
        <dbReference type="ChEBI" id="CHEBI:143809"/>
    </reaction>
    <physiologicalReaction direction="left-to-right" evidence="6">
        <dbReference type="Rhea" id="RHEA:60457"/>
    </physiologicalReaction>
</comment>
<comment type="cofactor">
    <cofactor evidence="2">
        <name>Mg(2+)</name>
        <dbReference type="ChEBI" id="CHEBI:18420"/>
    </cofactor>
    <text evidence="2">Binds 1 Mg(2+) ion per subunit.</text>
</comment>
<comment type="similarity">
    <text evidence="6">Belongs to the CD-NTase family. E01 subfamily.</text>
</comment>
<feature type="chain" id="PRO_0000447701" description="Cyclic UMP-AMP synthase">
    <location>
        <begin position="1"/>
        <end position="288"/>
    </location>
</feature>
<feature type="region of interest" description="Disordered" evidence="1">
    <location>
        <begin position="1"/>
        <end position="23"/>
    </location>
</feature>
<feature type="binding site" evidence="2">
    <location>
        <begin position="46"/>
        <end position="48"/>
    </location>
    <ligand>
        <name>ATP</name>
        <dbReference type="ChEBI" id="CHEBI:30616"/>
    </ligand>
</feature>
<feature type="binding site" evidence="2">
    <location>
        <position position="46"/>
    </location>
    <ligand>
        <name>UTP</name>
        <dbReference type="ChEBI" id="CHEBI:46398"/>
    </ligand>
</feature>
<feature type="binding site" evidence="2">
    <location>
        <position position="60"/>
    </location>
    <ligand>
        <name>Mg(2+)</name>
        <dbReference type="ChEBI" id="CHEBI:18420"/>
    </ligand>
</feature>
<feature type="binding site" evidence="2">
    <location>
        <position position="62"/>
    </location>
    <ligand>
        <name>Mg(2+)</name>
        <dbReference type="ChEBI" id="CHEBI:18420"/>
    </ligand>
</feature>
<feature type="binding site" evidence="2">
    <location>
        <position position="62"/>
    </location>
    <ligand>
        <name>UTP</name>
        <dbReference type="ChEBI" id="CHEBI:46398"/>
    </ligand>
</feature>
<feature type="binding site" evidence="2">
    <location>
        <begin position="116"/>
        <end position="120"/>
    </location>
    <ligand>
        <name>UTP</name>
        <dbReference type="ChEBI" id="CHEBI:46398"/>
    </ligand>
</feature>
<feature type="binding site" evidence="2">
    <location>
        <position position="129"/>
    </location>
    <ligand>
        <name>Mg(2+)</name>
        <dbReference type="ChEBI" id="CHEBI:18420"/>
    </ligand>
</feature>
<feature type="binding site" evidence="2">
    <location>
        <position position="166"/>
    </location>
    <ligand>
        <name>UTP</name>
        <dbReference type="ChEBI" id="CHEBI:46398"/>
    </ligand>
</feature>
<feature type="binding site" evidence="2">
    <location>
        <position position="194"/>
    </location>
    <ligand>
        <name>ATP</name>
        <dbReference type="ChEBI" id="CHEBI:30616"/>
    </ligand>
</feature>
<feature type="binding site" evidence="2">
    <location>
        <position position="212"/>
    </location>
    <ligand>
        <name>ATP</name>
        <dbReference type="ChEBI" id="CHEBI:30616"/>
    </ligand>
</feature>
<feature type="binding site" evidence="2">
    <location>
        <position position="265"/>
    </location>
    <ligand>
        <name>ATP</name>
        <dbReference type="ChEBI" id="CHEBI:30616"/>
    </ligand>
</feature>
<feature type="mutagenesis site" description="Loses pyrimidine specificity as this mutant incorporates almost no UTP and instead predominantly synthesizes c-di-AMP." evidence="2">
    <original>N</original>
    <variation>S</variation>
    <location>
        <position position="166"/>
    </location>
</feature>
<feature type="helix" evidence="10">
    <location>
        <begin position="5"/>
        <end position="11"/>
    </location>
</feature>
<feature type="helix" evidence="10">
    <location>
        <begin position="18"/>
        <end position="32"/>
    </location>
</feature>
<feature type="strand" evidence="10">
    <location>
        <begin position="42"/>
        <end position="45"/>
    </location>
</feature>
<feature type="helix" evidence="10">
    <location>
        <begin position="47"/>
        <end position="50"/>
    </location>
</feature>
<feature type="strand" evidence="10">
    <location>
        <begin position="57"/>
        <end position="59"/>
    </location>
</feature>
<feature type="strand" evidence="10">
    <location>
        <begin position="61"/>
        <end position="73"/>
    </location>
</feature>
<feature type="helix" evidence="10">
    <location>
        <begin position="77"/>
        <end position="82"/>
    </location>
</feature>
<feature type="helix" evidence="10">
    <location>
        <begin position="92"/>
        <end position="107"/>
    </location>
</feature>
<feature type="helix" evidence="10">
    <location>
        <begin position="109"/>
        <end position="111"/>
    </location>
</feature>
<feature type="strand" evidence="10">
    <location>
        <begin position="112"/>
        <end position="114"/>
    </location>
</feature>
<feature type="strand" evidence="10">
    <location>
        <begin position="116"/>
        <end position="122"/>
    </location>
</feature>
<feature type="strand" evidence="10">
    <location>
        <begin position="124"/>
        <end position="138"/>
    </location>
</feature>
<feature type="strand" evidence="10">
    <location>
        <begin position="141"/>
        <end position="143"/>
    </location>
</feature>
<feature type="strand" evidence="10">
    <location>
        <begin position="150"/>
        <end position="156"/>
    </location>
</feature>
<feature type="turn" evidence="10">
    <location>
        <begin position="158"/>
        <end position="160"/>
    </location>
</feature>
<feature type="strand" evidence="10">
    <location>
        <begin position="163"/>
        <end position="166"/>
    </location>
</feature>
<feature type="helix" evidence="10">
    <location>
        <begin position="168"/>
        <end position="181"/>
    </location>
</feature>
<feature type="turn" evidence="10">
    <location>
        <begin position="182"/>
        <end position="184"/>
    </location>
</feature>
<feature type="helix" evidence="10">
    <location>
        <begin position="186"/>
        <end position="202"/>
    </location>
</feature>
<feature type="helix" evidence="10">
    <location>
        <begin position="212"/>
        <end position="220"/>
    </location>
</feature>
<feature type="helix" evidence="10">
    <location>
        <begin position="224"/>
        <end position="226"/>
    </location>
</feature>
<feature type="helix" evidence="10">
    <location>
        <begin position="231"/>
        <end position="244"/>
    </location>
</feature>
<feature type="helix" evidence="10">
    <location>
        <begin position="247"/>
        <end position="249"/>
    </location>
</feature>
<feature type="strand" evidence="10">
    <location>
        <begin position="255"/>
        <end position="263"/>
    </location>
</feature>
<feature type="helix" evidence="10">
    <location>
        <begin position="269"/>
        <end position="285"/>
    </location>
</feature>
<evidence type="ECO:0000256" key="1">
    <source>
        <dbReference type="SAM" id="MobiDB-lite"/>
    </source>
</evidence>
<evidence type="ECO:0000269" key="2">
    <source>
    </source>
</evidence>
<evidence type="ECO:0000303" key="3">
    <source>
    </source>
</evidence>
<evidence type="ECO:0000303" key="4">
    <source>
    </source>
</evidence>
<evidence type="ECO:0000305" key="5"/>
<evidence type="ECO:0000305" key="6">
    <source>
    </source>
</evidence>
<evidence type="ECO:0000312" key="7">
    <source>
        <dbReference type="EMBL" id="AEN74717.1"/>
    </source>
</evidence>
<evidence type="ECO:0007744" key="8">
    <source>
        <dbReference type="PDB" id="6E0K"/>
    </source>
</evidence>
<evidence type="ECO:0007744" key="9">
    <source>
        <dbReference type="PDB" id="6E0L"/>
    </source>
</evidence>
<evidence type="ECO:0007829" key="10">
    <source>
        <dbReference type="PDB" id="6E0K"/>
    </source>
</evidence>
<dbReference type="EC" id="2.7.7.-" evidence="2"/>
<dbReference type="EMBL" id="CP003030">
    <property type="protein sequence ID" value="AEN74717.1"/>
    <property type="molecule type" value="Genomic_DNA"/>
</dbReference>
<dbReference type="PDB" id="6E0K">
    <property type="method" value="X-ray"/>
    <property type="resolution" value="1.60 A"/>
    <property type="chains" value="A=1-288"/>
</dbReference>
<dbReference type="PDB" id="6E0L">
    <property type="method" value="X-ray"/>
    <property type="resolution" value="2.25 A"/>
    <property type="chains" value="A=1-288"/>
</dbReference>
<dbReference type="PDBsum" id="6E0K"/>
<dbReference type="PDBsum" id="6E0L"/>
<dbReference type="SMR" id="G2SLH8"/>
<dbReference type="KEGG" id="rmg:Rhom172_2837"/>
<dbReference type="HOGENOM" id="CLU_080937_0_0_10"/>
<dbReference type="GO" id="GO:0005524">
    <property type="term" value="F:ATP binding"/>
    <property type="evidence" value="ECO:0007669"/>
    <property type="project" value="UniProtKB-KW"/>
</dbReference>
<dbReference type="GO" id="GO:0046872">
    <property type="term" value="F:metal ion binding"/>
    <property type="evidence" value="ECO:0007669"/>
    <property type="project" value="UniProtKB-KW"/>
</dbReference>
<dbReference type="GO" id="GO:0016779">
    <property type="term" value="F:nucleotidyltransferase activity"/>
    <property type="evidence" value="ECO:0007669"/>
    <property type="project" value="UniProtKB-KW"/>
</dbReference>
<dbReference type="GO" id="GO:0051607">
    <property type="term" value="P:defense response to virus"/>
    <property type="evidence" value="ECO:0007669"/>
    <property type="project" value="UniProtKB-KW"/>
</dbReference>
<dbReference type="GO" id="GO:0009117">
    <property type="term" value="P:nucleotide metabolic process"/>
    <property type="evidence" value="ECO:0007669"/>
    <property type="project" value="UniProtKB-KW"/>
</dbReference>
<dbReference type="CDD" id="cd05400">
    <property type="entry name" value="NT_2-5OAS_ClassI-CCAase"/>
    <property type="match status" value="1"/>
</dbReference>
<dbReference type="Gene3D" id="3.30.460.10">
    <property type="entry name" value="Beta Polymerase, domain 2"/>
    <property type="match status" value="1"/>
</dbReference>
<dbReference type="InterPro" id="IPR006116">
    <property type="entry name" value="NT_2-5OAS_ClassI-CCAase"/>
</dbReference>
<dbReference type="InterPro" id="IPR043519">
    <property type="entry name" value="NT_sf"/>
</dbReference>
<dbReference type="InterPro" id="IPR002934">
    <property type="entry name" value="Polymerase_NTP_transf_dom"/>
</dbReference>
<dbReference type="Pfam" id="PF01909">
    <property type="entry name" value="NTP_transf_2"/>
    <property type="match status" value="1"/>
</dbReference>
<dbReference type="SUPFAM" id="SSF81301">
    <property type="entry name" value="Nucleotidyltransferase"/>
    <property type="match status" value="1"/>
</dbReference>
<dbReference type="PROSITE" id="PS50152">
    <property type="entry name" value="25A_SYNTH_3"/>
    <property type="match status" value="1"/>
</dbReference>
<gene>
    <name evidence="3" type="primary">cdnE</name>
    <name evidence="7" type="ORF">Rhom172_2837</name>
</gene>
<protein>
    <recommendedName>
        <fullName evidence="3">Cyclic UMP-AMP synthase</fullName>
        <shortName evidence="3">cUMP-AMP synthase</shortName>
        <ecNumber evidence="2">2.7.7.-</ecNumber>
    </recommendedName>
    <alternativeName>
        <fullName evidence="6">3',3'-cUAMP synthase</fullName>
    </alternativeName>
    <alternativeName>
        <fullName>cGAS/DncV-like nucleotidyltransferase</fullName>
        <shortName evidence="3">CD-NTase</shortName>
        <shortName evidence="3">Rm-CdnE</shortName>
    </alternativeName>
</protein>
<geneLocation type="plasmid">
    <name>pRHOM17201</name>
</geneLocation>